<dbReference type="EC" id="3.1.11.-" evidence="1"/>
<dbReference type="EC" id="3.1.13.-" evidence="1"/>
<dbReference type="EMBL" id="CP001790">
    <property type="protein sequence ID" value="ACX89965.1"/>
    <property type="molecule type" value="Genomic_DNA"/>
</dbReference>
<dbReference type="RefSeq" id="WP_015731429.1">
    <property type="nucleotide sequence ID" value="NC_013421.1"/>
</dbReference>
<dbReference type="SMR" id="D0KC77"/>
<dbReference type="KEGG" id="pwa:Pecwa_4241"/>
<dbReference type="eggNOG" id="COG0084">
    <property type="taxonomic scope" value="Bacteria"/>
</dbReference>
<dbReference type="HOGENOM" id="CLU_031506_1_2_6"/>
<dbReference type="GO" id="GO:0005829">
    <property type="term" value="C:cytosol"/>
    <property type="evidence" value="ECO:0007669"/>
    <property type="project" value="TreeGrafter"/>
</dbReference>
<dbReference type="GO" id="GO:0000175">
    <property type="term" value="F:3'-5'-RNA exonuclease activity"/>
    <property type="evidence" value="ECO:0007669"/>
    <property type="project" value="UniProtKB-UniRule"/>
</dbReference>
<dbReference type="GO" id="GO:0000287">
    <property type="term" value="F:magnesium ion binding"/>
    <property type="evidence" value="ECO:0007669"/>
    <property type="project" value="UniProtKB-UniRule"/>
</dbReference>
<dbReference type="GO" id="GO:0008310">
    <property type="term" value="F:single-stranded DNA 3'-5' DNA exonuclease activity"/>
    <property type="evidence" value="ECO:0007669"/>
    <property type="project" value="UniProtKB-UniRule"/>
</dbReference>
<dbReference type="CDD" id="cd01310">
    <property type="entry name" value="TatD_DNAse"/>
    <property type="match status" value="1"/>
</dbReference>
<dbReference type="FunFam" id="3.20.20.140:FF:000018">
    <property type="entry name" value="3'-5' ssDNA/RNA exonuclease TatD"/>
    <property type="match status" value="1"/>
</dbReference>
<dbReference type="Gene3D" id="3.20.20.140">
    <property type="entry name" value="Metal-dependent hydrolases"/>
    <property type="match status" value="1"/>
</dbReference>
<dbReference type="HAMAP" id="MF_00901">
    <property type="entry name" value="TatD_exonuclease"/>
    <property type="match status" value="1"/>
</dbReference>
<dbReference type="InterPro" id="IPR018228">
    <property type="entry name" value="DNase_TatD-rel_CS"/>
</dbReference>
<dbReference type="InterPro" id="IPR024918">
    <property type="entry name" value="Exonuc_TatD"/>
</dbReference>
<dbReference type="InterPro" id="IPR032466">
    <property type="entry name" value="Metal_Hydrolase"/>
</dbReference>
<dbReference type="InterPro" id="IPR001130">
    <property type="entry name" value="TatD-like"/>
</dbReference>
<dbReference type="NCBIfam" id="NF007745">
    <property type="entry name" value="PRK10425.1"/>
    <property type="match status" value="1"/>
</dbReference>
<dbReference type="PANTHER" id="PTHR46124">
    <property type="entry name" value="D-AMINOACYL-TRNA DEACYLASE"/>
    <property type="match status" value="1"/>
</dbReference>
<dbReference type="PANTHER" id="PTHR46124:SF2">
    <property type="entry name" value="D-AMINOACYL-TRNA DEACYLASE"/>
    <property type="match status" value="1"/>
</dbReference>
<dbReference type="Pfam" id="PF01026">
    <property type="entry name" value="TatD_DNase"/>
    <property type="match status" value="1"/>
</dbReference>
<dbReference type="PIRSF" id="PIRSF005902">
    <property type="entry name" value="DNase_TatD"/>
    <property type="match status" value="1"/>
</dbReference>
<dbReference type="SUPFAM" id="SSF51556">
    <property type="entry name" value="Metallo-dependent hydrolases"/>
    <property type="match status" value="1"/>
</dbReference>
<dbReference type="PROSITE" id="PS01091">
    <property type="entry name" value="TATD_3"/>
    <property type="match status" value="1"/>
</dbReference>
<accession>D0KC77</accession>
<sequence>MFDIGVNLTSSQFEQDREQVVIRAKQAGVSGILITGTNAQESHQAMLLAQAYPDYCWSTAGVHPHDASQWNGDIAEQVHHMANAACVVAIGECGLDFNRNFSTPEEQERAFSAQLAIAAELSMPVFLHCRDAHPRFISLLTPWLGQLPAAVVHCFTGNRQELDACLAVGLTIGITGWVCDERRGLELRALLPHIPADRLLVETDAPYLLPRDLRPKPASRRNEPCYLPHIIRQIAEWRGEDATWLGQITDENARRIFRLA</sequence>
<organism>
    <name type="scientific">Pectobacterium parmentieri (strain WPP163)</name>
    <name type="common">Pectobacterium wasabiae (strain WPP163)</name>
    <dbReference type="NCBI Taxonomy" id="561231"/>
    <lineage>
        <taxon>Bacteria</taxon>
        <taxon>Pseudomonadati</taxon>
        <taxon>Pseudomonadota</taxon>
        <taxon>Gammaproteobacteria</taxon>
        <taxon>Enterobacterales</taxon>
        <taxon>Pectobacteriaceae</taxon>
        <taxon>Pectobacterium</taxon>
    </lineage>
</organism>
<evidence type="ECO:0000255" key="1">
    <source>
        <dbReference type="HAMAP-Rule" id="MF_00901"/>
    </source>
</evidence>
<comment type="function">
    <text evidence="1">3'-5' exonuclease that prefers single-stranded DNA and RNA. May play a role in the H(2)O(2)-induced DNA damage repair.</text>
</comment>
<comment type="cofactor">
    <cofactor evidence="1">
        <name>Mg(2+)</name>
        <dbReference type="ChEBI" id="CHEBI:18420"/>
    </cofactor>
</comment>
<comment type="subunit">
    <text evidence="1">Monomer.</text>
</comment>
<comment type="subcellular location">
    <subcellularLocation>
        <location evidence="1">Cytoplasm</location>
    </subcellularLocation>
</comment>
<comment type="similarity">
    <text evidence="1">Belongs to the metallo-dependent hydrolases superfamily. TatD-type hydrolase family. TatD subfamily.</text>
</comment>
<reference key="1">
    <citation type="submission" date="2009-10" db="EMBL/GenBank/DDBJ databases">
        <title>Complete sequence of Pectobacterium wasabiae WPP163.</title>
        <authorList>
            <consortium name="US DOE Joint Genome Institute"/>
            <person name="Lucas S."/>
            <person name="Copeland A."/>
            <person name="Lapidus A."/>
            <person name="Glavina del Rio T."/>
            <person name="Tice H."/>
            <person name="Bruce D."/>
            <person name="Goodwin L."/>
            <person name="Pitluck S."/>
            <person name="Chertkov O."/>
            <person name="Brettin T."/>
            <person name="Detter J.C."/>
            <person name="Han C."/>
            <person name="Larimer F."/>
            <person name="Land M."/>
            <person name="Hauser L."/>
            <person name="Kyrpides N."/>
            <person name="Ovchinnikova G."/>
            <person name="Balakrishnan V."/>
            <person name="Glasner J."/>
            <person name="Perna N.T."/>
        </authorList>
    </citation>
    <scope>NUCLEOTIDE SEQUENCE [LARGE SCALE GENOMIC DNA]</scope>
    <source>
        <strain>WPP163</strain>
    </source>
</reference>
<protein>
    <recommendedName>
        <fullName evidence="1">3'-5' ssDNA/RNA exonuclease TatD</fullName>
        <ecNumber evidence="1">3.1.11.-</ecNumber>
        <ecNumber evidence="1">3.1.13.-</ecNumber>
    </recommendedName>
    <alternativeName>
        <fullName evidence="1">DNase TatD</fullName>
    </alternativeName>
</protein>
<feature type="chain" id="PRO_0000412749" description="3'-5' ssDNA/RNA exonuclease TatD">
    <location>
        <begin position="1"/>
        <end position="260"/>
    </location>
</feature>
<feature type="binding site" evidence="1">
    <location>
        <position position="92"/>
    </location>
    <ligand>
        <name>a divalent metal cation</name>
        <dbReference type="ChEBI" id="CHEBI:60240"/>
    </ligand>
</feature>
<feature type="binding site" evidence="1">
    <location>
        <position position="128"/>
    </location>
    <ligand>
        <name>a divalent metal cation</name>
        <dbReference type="ChEBI" id="CHEBI:60240"/>
    </ligand>
</feature>
<feature type="binding site" evidence="1">
    <location>
        <position position="153"/>
    </location>
    <ligand>
        <name>a divalent metal cation</name>
        <dbReference type="ChEBI" id="CHEBI:60240"/>
    </ligand>
</feature>
<proteinExistence type="inferred from homology"/>
<name>TATD_PECPW</name>
<gene>
    <name evidence="1" type="primary">tatD</name>
    <name type="ordered locus">Pecwa_4241</name>
</gene>
<keyword id="KW-0963">Cytoplasm</keyword>
<keyword id="KW-0269">Exonuclease</keyword>
<keyword id="KW-0378">Hydrolase</keyword>
<keyword id="KW-0460">Magnesium</keyword>
<keyword id="KW-0479">Metal-binding</keyword>
<keyword id="KW-0540">Nuclease</keyword>